<sequence length="1035" mass="117851">MQDPDGIDINTKIFNSVAEVFQKAQGSYAGHRKHIAVLKKIQSKAVEQGYEDAFNFWFDKLVTKILPLKKNEIIGDRIVKLVAAFIASLERELILAKKQNYKLTNDEEGIFSRFVDQFIRHVLRGVESPDKNVRFRVLQLLAVIMDNIGEIDESLFNLLILSLNKRIYDREPTVRIQAVFCLTKFQDEEQTEHLTELSDNEENFEATRTLVASIQNDPSAEVRRAAMLNLINDNNTRPYILERARDVNIVNRRLVYSRILKSMGRKCFDDIEPHIFDQLIEWGLEDRELSVRNACKRLIAHDWLNALDGDLIELLEKLDVSRSSVCVKAIEALFQSRPDILSKIKFPESIWKDFTVEIAFLFRAIYLYCLDNNITEMLEENFPEASKLSEHLNHYILLRYHHNDISNDSQSHFDYNTLEFIIEQLSIAAERYDYSDEVGRRSMLTVVRNMLALTTLSEPLIKIGIRVMKSLSINEKDFVTMAIEIINDIRDDDIEKQEQEEKIKSKKINRRNETSVDEEDENGTHNDEVNEDEEDDNISSFHSAVENLVQGNGNVSESDIINNLPPEKEASSATIVLCLTRSSYMLELVNTPLTENILIASLMDTLITPAVRNTAPNIRELGVKNLGLCCLLDVKLAIDNMYILGMCVSKGNASLKYIALQVIVDIFSVHGNTVVDGEGKVDSISLHKIFYKVLKNNGLPECQVIAAEGLCKLFLADVFTDDDLFETLVLSYFSPINSSNEALVQAFAFCIPVYCFSHPAHQQRMSRTAADILLRLCVLWDDLQSSVIPEVDREAMLKPNIIFQQLLFWTDPRNLVNQTGSTKKDTVQLTFLIDVLKIYAQIEKKEIKKMIITNINAIFLSSEQDYSTLKELLEYSDDIAENDNLDNVSKNALDKLRNNLNSLIEEINERSETQTKDENNTANDQYSSILGNSFNKSSNDTIEHAADITDGNNTELTKTTVNISAVDNTTEQSNSRKRTRSEAEQIDTSKNLENMSIQDTSTVAKNVSFVLPDEKSDAMSIDEEDKDSESFSEVC</sequence>
<reference key="1">
    <citation type="journal article" date="1997" name="Nature">
        <title>The nucleotide sequence of Saccharomyces cerevisiae chromosome IV.</title>
        <authorList>
            <person name="Jacq C."/>
            <person name="Alt-Moerbe J."/>
            <person name="Andre B."/>
            <person name="Arnold W."/>
            <person name="Bahr A."/>
            <person name="Ballesta J.P.G."/>
            <person name="Bargues M."/>
            <person name="Baron L."/>
            <person name="Becker A."/>
            <person name="Biteau N."/>
            <person name="Bloecker H."/>
            <person name="Blugeon C."/>
            <person name="Boskovic J."/>
            <person name="Brandt P."/>
            <person name="Brueckner M."/>
            <person name="Buitrago M.J."/>
            <person name="Coster F."/>
            <person name="Delaveau T."/>
            <person name="del Rey F."/>
            <person name="Dujon B."/>
            <person name="Eide L.G."/>
            <person name="Garcia-Cantalejo J.M."/>
            <person name="Goffeau A."/>
            <person name="Gomez-Peris A."/>
            <person name="Granotier C."/>
            <person name="Hanemann V."/>
            <person name="Hankeln T."/>
            <person name="Hoheisel J.D."/>
            <person name="Jaeger W."/>
            <person name="Jimenez A."/>
            <person name="Jonniaux J.-L."/>
            <person name="Kraemer C."/>
            <person name="Kuester H."/>
            <person name="Laamanen P."/>
            <person name="Legros Y."/>
            <person name="Louis E.J."/>
            <person name="Moeller-Rieker S."/>
            <person name="Monnet A."/>
            <person name="Moro M."/>
            <person name="Mueller-Auer S."/>
            <person name="Nussbaumer B."/>
            <person name="Paricio N."/>
            <person name="Paulin L."/>
            <person name="Perea J."/>
            <person name="Perez-Alonso M."/>
            <person name="Perez-Ortin J.E."/>
            <person name="Pohl T.M."/>
            <person name="Prydz H."/>
            <person name="Purnelle B."/>
            <person name="Rasmussen S.W."/>
            <person name="Remacha M.A."/>
            <person name="Revuelta J.L."/>
            <person name="Rieger M."/>
            <person name="Salom D."/>
            <person name="Saluz H.P."/>
            <person name="Saiz J.E."/>
            <person name="Saren A.-M."/>
            <person name="Schaefer M."/>
            <person name="Scharfe M."/>
            <person name="Schmidt E.R."/>
            <person name="Schneider C."/>
            <person name="Scholler P."/>
            <person name="Schwarz S."/>
            <person name="Soler-Mira A."/>
            <person name="Urrestarazu L.A."/>
            <person name="Verhasselt P."/>
            <person name="Vissers S."/>
            <person name="Voet M."/>
            <person name="Volckaert G."/>
            <person name="Wagner G."/>
            <person name="Wambutt R."/>
            <person name="Wedler E."/>
            <person name="Wedler H."/>
            <person name="Woelfl S."/>
            <person name="Harris D.E."/>
            <person name="Bowman S."/>
            <person name="Brown D."/>
            <person name="Churcher C.M."/>
            <person name="Connor R."/>
            <person name="Dedman K."/>
            <person name="Gentles S."/>
            <person name="Hamlin N."/>
            <person name="Hunt S."/>
            <person name="Jones L."/>
            <person name="McDonald S."/>
            <person name="Murphy L.D."/>
            <person name="Niblett D."/>
            <person name="Odell C."/>
            <person name="Oliver K."/>
            <person name="Rajandream M.A."/>
            <person name="Richards C."/>
            <person name="Shore L."/>
            <person name="Walsh S.V."/>
            <person name="Barrell B.G."/>
            <person name="Dietrich F.S."/>
            <person name="Mulligan J.T."/>
            <person name="Allen E."/>
            <person name="Araujo R."/>
            <person name="Aviles E."/>
            <person name="Berno A."/>
            <person name="Carpenter J."/>
            <person name="Chen E."/>
            <person name="Cherry J.M."/>
            <person name="Chung E."/>
            <person name="Duncan M."/>
            <person name="Hunicke-Smith S."/>
            <person name="Hyman R.W."/>
            <person name="Komp C."/>
            <person name="Lashkari D."/>
            <person name="Lew H."/>
            <person name="Lin D."/>
            <person name="Mosedale D."/>
            <person name="Nakahara K."/>
            <person name="Namath A."/>
            <person name="Oefner P."/>
            <person name="Oh C."/>
            <person name="Petel F.X."/>
            <person name="Roberts D."/>
            <person name="Schramm S."/>
            <person name="Schroeder M."/>
            <person name="Shogren T."/>
            <person name="Shroff N."/>
            <person name="Winant A."/>
            <person name="Yelton M.A."/>
            <person name="Botstein D."/>
            <person name="Davis R.W."/>
            <person name="Johnston M."/>
            <person name="Andrews S."/>
            <person name="Brinkman R."/>
            <person name="Cooper J."/>
            <person name="Ding H."/>
            <person name="Du Z."/>
            <person name="Favello A."/>
            <person name="Fulton L."/>
            <person name="Gattung S."/>
            <person name="Greco T."/>
            <person name="Hallsworth K."/>
            <person name="Hawkins J."/>
            <person name="Hillier L.W."/>
            <person name="Jier M."/>
            <person name="Johnson D."/>
            <person name="Johnston L."/>
            <person name="Kirsten J."/>
            <person name="Kucaba T."/>
            <person name="Langston Y."/>
            <person name="Latreille P."/>
            <person name="Le T."/>
            <person name="Mardis E."/>
            <person name="Menezes S."/>
            <person name="Miller N."/>
            <person name="Nhan M."/>
            <person name="Pauley A."/>
            <person name="Peluso D."/>
            <person name="Rifkin L."/>
            <person name="Riles L."/>
            <person name="Taich A."/>
            <person name="Trevaskis E."/>
            <person name="Vignati D."/>
            <person name="Wilcox L."/>
            <person name="Wohldman P."/>
            <person name="Vaudin M."/>
            <person name="Wilson R."/>
            <person name="Waterston R."/>
            <person name="Albermann K."/>
            <person name="Hani J."/>
            <person name="Heumann K."/>
            <person name="Kleine K."/>
            <person name="Mewes H.-W."/>
            <person name="Zollner A."/>
            <person name="Zaccaria P."/>
        </authorList>
    </citation>
    <scope>NUCLEOTIDE SEQUENCE [LARGE SCALE GENOMIC DNA]</scope>
    <source>
        <strain>ATCC 204508 / S288c</strain>
    </source>
</reference>
<reference key="2">
    <citation type="submission" date="2002-12" db="EMBL/GenBank/DDBJ databases">
        <authorList>
            <person name="Sethuraman A."/>
            <person name="Dolinski K.J."/>
        </authorList>
    </citation>
    <scope>SEQUENCE REVISION</scope>
</reference>
<reference key="3">
    <citation type="journal article" date="2014" name="G3 (Bethesda)">
        <title>The reference genome sequence of Saccharomyces cerevisiae: Then and now.</title>
        <authorList>
            <person name="Engel S.R."/>
            <person name="Dietrich F.S."/>
            <person name="Fisk D.G."/>
            <person name="Binkley G."/>
            <person name="Balakrishnan R."/>
            <person name="Costanzo M.C."/>
            <person name="Dwight S.S."/>
            <person name="Hitz B.C."/>
            <person name="Karra K."/>
            <person name="Nash R.S."/>
            <person name="Weng S."/>
            <person name="Wong E.D."/>
            <person name="Lloyd P."/>
            <person name="Skrzypek M.S."/>
            <person name="Miyasato S.R."/>
            <person name="Simison M."/>
            <person name="Cherry J.M."/>
        </authorList>
    </citation>
    <scope>GENOME REANNOTATION</scope>
    <source>
        <strain>ATCC 204508 / S288c</strain>
    </source>
</reference>
<reference key="4">
    <citation type="journal article" date="2000" name="J. Cell Biol.">
        <title>The condensin complex governs chromosome condensation and mitotic transmission of rDNA.</title>
        <authorList>
            <person name="Freeman L."/>
            <person name="Aragon-Alcaide L."/>
            <person name="Strunnikov A.V."/>
        </authorList>
    </citation>
    <scope>IDENTIFICATION IN A CONDENSIN COMPLEX WITH SMC2; SMC4; BRN1 AND YCS4</scope>
</reference>
<reference key="5">
    <citation type="journal article" date="2003" name="Nature">
        <title>Global analysis of protein expression in yeast.</title>
        <authorList>
            <person name="Ghaemmaghami S."/>
            <person name="Huh W.-K."/>
            <person name="Bower K."/>
            <person name="Howson R.W."/>
            <person name="Belle A."/>
            <person name="Dephoure N."/>
            <person name="O'Shea E.K."/>
            <person name="Weissman J.S."/>
        </authorList>
    </citation>
    <scope>LEVEL OF PROTEIN EXPRESSION [LARGE SCALE ANALYSIS]</scope>
</reference>
<reference key="6">
    <citation type="journal article" date="2007" name="J. Proteome Res.">
        <title>Large-scale phosphorylation analysis of alpha-factor-arrested Saccharomyces cerevisiae.</title>
        <authorList>
            <person name="Li X."/>
            <person name="Gerber S.A."/>
            <person name="Rudner A.D."/>
            <person name="Beausoleil S.A."/>
            <person name="Haas W."/>
            <person name="Villen J."/>
            <person name="Elias J.E."/>
            <person name="Gygi S.P."/>
        </authorList>
    </citation>
    <scope>IDENTIFICATION BY MASS SPECTROMETRY [LARGE SCALE ANALYSIS]</scope>
    <source>
        <strain>ADR376</strain>
    </source>
</reference>
<reference key="7">
    <citation type="journal article" date="2007" name="Proc. Natl. Acad. Sci. U.S.A.">
        <title>Analysis of phosphorylation sites on proteins from Saccharomyces cerevisiae by electron transfer dissociation (ETD) mass spectrometry.</title>
        <authorList>
            <person name="Chi A."/>
            <person name="Huttenhower C."/>
            <person name="Geer L.Y."/>
            <person name="Coon J.J."/>
            <person name="Syka J.E.P."/>
            <person name="Bai D.L."/>
            <person name="Shabanowitz J."/>
            <person name="Burke D.J."/>
            <person name="Troyanskaya O.G."/>
            <person name="Hunt D.F."/>
        </authorList>
    </citation>
    <scope>PHOSPHORYLATION [LARGE SCALE ANALYSIS] AT SER-981</scope>
    <scope>IDENTIFICATION BY MASS SPECTROMETRY [LARGE SCALE ANALYSIS]</scope>
</reference>
<reference key="8">
    <citation type="journal article" date="2008" name="Mol. Cell. Proteomics">
        <title>A multidimensional chromatography technology for in-depth phosphoproteome analysis.</title>
        <authorList>
            <person name="Albuquerque C.P."/>
            <person name="Smolka M.B."/>
            <person name="Payne S.H."/>
            <person name="Bafna V."/>
            <person name="Eng J."/>
            <person name="Zhou H."/>
        </authorList>
    </citation>
    <scope>PHOSPHORYLATION [LARGE SCALE ANALYSIS] AT SER-933 AND SER-1008</scope>
    <scope>IDENTIFICATION BY MASS SPECTROMETRY [LARGE SCALE ANALYSIS]</scope>
</reference>
<reference key="9">
    <citation type="journal article" date="2009" name="Science">
        <title>Global analysis of Cdk1 substrate phosphorylation sites provides insights into evolution.</title>
        <authorList>
            <person name="Holt L.J."/>
            <person name="Tuch B.B."/>
            <person name="Villen J."/>
            <person name="Johnson A.D."/>
            <person name="Gygi S.P."/>
            <person name="Morgan D.O."/>
        </authorList>
    </citation>
    <scope>PHOSPHORYLATION [LARGE SCALE ANALYSIS] AT SER-198</scope>
    <scope>IDENTIFICATION BY MASS SPECTROMETRY [LARGE SCALE ANALYSIS]</scope>
</reference>
<proteinExistence type="evidence at protein level"/>
<keyword id="KW-0002">3D-structure</keyword>
<keyword id="KW-0131">Cell cycle</keyword>
<keyword id="KW-0132">Cell division</keyword>
<keyword id="KW-0158">Chromosome</keyword>
<keyword id="KW-0963">Cytoplasm</keyword>
<keyword id="KW-0226">DNA condensation</keyword>
<keyword id="KW-0498">Mitosis</keyword>
<keyword id="KW-0539">Nucleus</keyword>
<keyword id="KW-0597">Phosphoprotein</keyword>
<keyword id="KW-1185">Reference proteome</keyword>
<keyword id="KW-0677">Repeat</keyword>
<protein>
    <recommendedName>
        <fullName>Condensin complex subunit 3</fullName>
    </recommendedName>
    <alternativeName>
        <fullName>CAPG homolog</fullName>
    </alternativeName>
</protein>
<evidence type="ECO:0000256" key="1">
    <source>
        <dbReference type="SAM" id="MobiDB-lite"/>
    </source>
</evidence>
<evidence type="ECO:0000269" key="2">
    <source>
    </source>
</evidence>
<evidence type="ECO:0000269" key="3">
    <source>
    </source>
</evidence>
<evidence type="ECO:0000305" key="4"/>
<evidence type="ECO:0007744" key="5">
    <source>
    </source>
</evidence>
<evidence type="ECO:0007744" key="6">
    <source>
    </source>
</evidence>
<evidence type="ECO:0007744" key="7">
    <source>
    </source>
</evidence>
<evidence type="ECO:0007829" key="8">
    <source>
        <dbReference type="PDB" id="5OQN"/>
    </source>
</evidence>
<evidence type="ECO:0007829" key="9">
    <source>
        <dbReference type="PDB" id="5OQP"/>
    </source>
</evidence>
<evidence type="ECO:0007829" key="10">
    <source>
        <dbReference type="PDB" id="5OQQ"/>
    </source>
</evidence>
<evidence type="ECO:0007829" key="11">
    <source>
        <dbReference type="PDB" id="7Q2Z"/>
    </source>
</evidence>
<feature type="chain" id="PRO_0000095048" description="Condensin complex subunit 3">
    <location>
        <begin position="1"/>
        <end position="1035"/>
    </location>
</feature>
<feature type="repeat" description="HEAT 1">
    <location>
        <begin position="113"/>
        <end position="150"/>
    </location>
</feature>
<feature type="repeat" description="HEAT 2">
    <location>
        <begin position="153"/>
        <end position="191"/>
    </location>
</feature>
<feature type="repeat" description="HEAT 3">
    <location>
        <begin position="201"/>
        <end position="239"/>
    </location>
</feature>
<feature type="repeat" description="HEAT 4">
    <location>
        <begin position="597"/>
        <end position="635"/>
    </location>
</feature>
<feature type="repeat" description="HEAT 5">
    <location>
        <begin position="827"/>
        <end position="864"/>
    </location>
</feature>
<feature type="region of interest" description="Disordered" evidence="1">
    <location>
        <begin position="500"/>
        <end position="536"/>
    </location>
</feature>
<feature type="region of interest" description="Disordered" evidence="1">
    <location>
        <begin position="909"/>
        <end position="934"/>
    </location>
</feature>
<feature type="region of interest" description="Disordered" evidence="1">
    <location>
        <begin position="959"/>
        <end position="995"/>
    </location>
</feature>
<feature type="region of interest" description="Disordered" evidence="1">
    <location>
        <begin position="1012"/>
        <end position="1035"/>
    </location>
</feature>
<feature type="compositionally biased region" description="Basic and acidic residues" evidence="1">
    <location>
        <begin position="909"/>
        <end position="919"/>
    </location>
</feature>
<feature type="compositionally biased region" description="Polar residues" evidence="1">
    <location>
        <begin position="920"/>
        <end position="934"/>
    </location>
</feature>
<feature type="compositionally biased region" description="Polar residues" evidence="1">
    <location>
        <begin position="959"/>
        <end position="973"/>
    </location>
</feature>
<feature type="compositionally biased region" description="Polar residues" evidence="1">
    <location>
        <begin position="986"/>
        <end position="995"/>
    </location>
</feature>
<feature type="modified residue" description="Phosphoserine" evidence="7">
    <location>
        <position position="198"/>
    </location>
</feature>
<feature type="modified residue" description="Phosphoserine" evidence="6">
    <location>
        <position position="933"/>
    </location>
</feature>
<feature type="modified residue" description="Phosphoserine" evidence="5">
    <location>
        <position position="981"/>
    </location>
</feature>
<feature type="modified residue" description="Phosphoserine" evidence="6">
    <location>
        <position position="1008"/>
    </location>
</feature>
<feature type="helix" evidence="10">
    <location>
        <begin position="9"/>
        <end position="24"/>
    </location>
</feature>
<feature type="helix" evidence="10">
    <location>
        <begin position="31"/>
        <end position="47"/>
    </location>
</feature>
<feature type="helix" evidence="10">
    <location>
        <begin position="51"/>
        <end position="63"/>
    </location>
</feature>
<feature type="turn" evidence="10">
    <location>
        <begin position="64"/>
        <end position="67"/>
    </location>
</feature>
<feature type="helix" evidence="10">
    <location>
        <begin position="73"/>
        <end position="98"/>
    </location>
</feature>
<feature type="helix" evidence="10">
    <location>
        <begin position="107"/>
        <end position="123"/>
    </location>
</feature>
<feature type="turn" evidence="10">
    <location>
        <begin position="124"/>
        <end position="127"/>
    </location>
</feature>
<feature type="helix" evidence="10">
    <location>
        <begin position="131"/>
        <end position="144"/>
    </location>
</feature>
<feature type="helix" evidence="10">
    <location>
        <begin position="145"/>
        <end position="147"/>
    </location>
</feature>
<feature type="helix" evidence="10">
    <location>
        <begin position="153"/>
        <end position="166"/>
    </location>
</feature>
<feature type="strand" evidence="10">
    <location>
        <begin position="169"/>
        <end position="171"/>
    </location>
</feature>
<feature type="helix" evidence="10">
    <location>
        <begin position="172"/>
        <end position="183"/>
    </location>
</feature>
<feature type="helix" evidence="10">
    <location>
        <begin position="206"/>
        <end position="216"/>
    </location>
</feature>
<feature type="helix" evidence="10">
    <location>
        <begin position="220"/>
        <end position="229"/>
    </location>
</feature>
<feature type="turn" evidence="10">
    <location>
        <begin position="234"/>
        <end position="236"/>
    </location>
</feature>
<feature type="helix" evidence="10">
    <location>
        <begin position="237"/>
        <end position="241"/>
    </location>
</feature>
<feature type="helix" evidence="10">
    <location>
        <begin position="242"/>
        <end position="245"/>
    </location>
</feature>
<feature type="strand" evidence="10">
    <location>
        <begin position="246"/>
        <end position="248"/>
    </location>
</feature>
<feature type="helix" evidence="10">
    <location>
        <begin position="249"/>
        <end position="257"/>
    </location>
</feature>
<feature type="helix" evidence="10">
    <location>
        <begin position="259"/>
        <end position="263"/>
    </location>
</feature>
<feature type="helix" evidence="10">
    <location>
        <begin position="264"/>
        <end position="268"/>
    </location>
</feature>
<feature type="helix" evidence="10">
    <location>
        <begin position="273"/>
        <end position="285"/>
    </location>
</feature>
<feature type="helix" evidence="10">
    <location>
        <begin position="289"/>
        <end position="300"/>
    </location>
</feature>
<feature type="helix" evidence="10">
    <location>
        <begin position="302"/>
        <end position="306"/>
    </location>
</feature>
<feature type="turn" evidence="10">
    <location>
        <begin position="307"/>
        <end position="309"/>
    </location>
</feature>
<feature type="helix" evidence="10">
    <location>
        <begin position="311"/>
        <end position="318"/>
    </location>
</feature>
<feature type="helix" evidence="10">
    <location>
        <begin position="320"/>
        <end position="322"/>
    </location>
</feature>
<feature type="helix" evidence="10">
    <location>
        <begin position="326"/>
        <end position="336"/>
    </location>
</feature>
<feature type="helix" evidence="10">
    <location>
        <begin position="338"/>
        <end position="341"/>
    </location>
</feature>
<feature type="helix" evidence="10">
    <location>
        <begin position="348"/>
        <end position="353"/>
    </location>
</feature>
<feature type="helix" evidence="10">
    <location>
        <begin position="356"/>
        <end position="371"/>
    </location>
</feature>
<feature type="helix" evidence="10">
    <location>
        <begin position="375"/>
        <end position="378"/>
    </location>
</feature>
<feature type="turn" evidence="10">
    <location>
        <begin position="379"/>
        <end position="381"/>
    </location>
</feature>
<feature type="helix" evidence="10">
    <location>
        <begin position="385"/>
        <end position="400"/>
    </location>
</feature>
<feature type="helix" evidence="10">
    <location>
        <begin position="415"/>
        <end position="430"/>
    </location>
</feature>
<feature type="helix" evidence="10">
    <location>
        <begin position="437"/>
        <end position="451"/>
    </location>
</feature>
<feature type="helix" evidence="10">
    <location>
        <begin position="458"/>
        <end position="471"/>
    </location>
</feature>
<feature type="strand" evidence="10">
    <location>
        <begin position="472"/>
        <end position="474"/>
    </location>
</feature>
<feature type="helix" evidence="10">
    <location>
        <begin position="475"/>
        <end position="497"/>
    </location>
</feature>
<feature type="helix" evidence="10">
    <location>
        <begin position="572"/>
        <end position="586"/>
    </location>
</feature>
<feature type="helix" evidence="10">
    <location>
        <begin position="593"/>
        <end position="595"/>
    </location>
</feature>
<feature type="helix" evidence="10">
    <location>
        <begin position="597"/>
        <end position="605"/>
    </location>
</feature>
<feature type="helix" evidence="10">
    <location>
        <begin position="607"/>
        <end position="612"/>
    </location>
</feature>
<feature type="helix" evidence="10">
    <location>
        <begin position="616"/>
        <end position="630"/>
    </location>
</feature>
<feature type="helix" evidence="10">
    <location>
        <begin position="634"/>
        <end position="639"/>
    </location>
</feature>
<feature type="helix" evidence="10">
    <location>
        <begin position="641"/>
        <end position="649"/>
    </location>
</feature>
<feature type="helix" evidence="10">
    <location>
        <begin position="653"/>
        <end position="670"/>
    </location>
</feature>
<feature type="helix" evidence="10">
    <location>
        <begin position="671"/>
        <end position="674"/>
    </location>
</feature>
<feature type="strand" evidence="10">
    <location>
        <begin position="675"/>
        <end position="677"/>
    </location>
</feature>
<feature type="helix" evidence="10">
    <location>
        <begin position="683"/>
        <end position="694"/>
    </location>
</feature>
<feature type="helix" evidence="10">
    <location>
        <begin position="700"/>
        <end position="715"/>
    </location>
</feature>
<feature type="strand" evidence="11">
    <location>
        <begin position="716"/>
        <end position="718"/>
    </location>
</feature>
<feature type="helix" evidence="10">
    <location>
        <begin position="722"/>
        <end position="733"/>
    </location>
</feature>
<feature type="helix" evidence="10">
    <location>
        <begin position="736"/>
        <end position="739"/>
    </location>
</feature>
<feature type="helix" evidence="10">
    <location>
        <begin position="741"/>
        <end position="757"/>
    </location>
</feature>
<feature type="helix" evidence="10">
    <location>
        <begin position="759"/>
        <end position="782"/>
    </location>
</feature>
<feature type="helix" evidence="8">
    <location>
        <begin position="793"/>
        <end position="795"/>
    </location>
</feature>
<feature type="helix" evidence="10">
    <location>
        <begin position="799"/>
        <end position="809"/>
    </location>
</feature>
<feature type="helix" evidence="10">
    <location>
        <begin position="812"/>
        <end position="814"/>
    </location>
</feature>
<feature type="strand" evidence="10">
    <location>
        <begin position="819"/>
        <end position="821"/>
    </location>
</feature>
<feature type="helix" evidence="10">
    <location>
        <begin position="827"/>
        <end position="838"/>
    </location>
</feature>
<feature type="helix" evidence="9">
    <location>
        <begin position="839"/>
        <end position="841"/>
    </location>
</feature>
<feature type="helix" evidence="10">
    <location>
        <begin position="845"/>
        <end position="853"/>
    </location>
</feature>
<feature type="helix" evidence="9">
    <location>
        <begin position="855"/>
        <end position="857"/>
    </location>
</feature>
<feature type="strand" evidence="11">
    <location>
        <begin position="862"/>
        <end position="864"/>
    </location>
</feature>
<feature type="helix" evidence="10">
    <location>
        <begin position="866"/>
        <end position="878"/>
    </location>
</feature>
<feature type="helix" evidence="10">
    <location>
        <begin position="889"/>
        <end position="910"/>
    </location>
</feature>
<organism>
    <name type="scientific">Saccharomyces cerevisiae (strain ATCC 204508 / S288c)</name>
    <name type="common">Baker's yeast</name>
    <dbReference type="NCBI Taxonomy" id="559292"/>
    <lineage>
        <taxon>Eukaryota</taxon>
        <taxon>Fungi</taxon>
        <taxon>Dikarya</taxon>
        <taxon>Ascomycota</taxon>
        <taxon>Saccharomycotina</taxon>
        <taxon>Saccharomycetes</taxon>
        <taxon>Saccharomycetales</taxon>
        <taxon>Saccharomycetaceae</taxon>
        <taxon>Saccharomyces</taxon>
    </lineage>
</organism>
<accession>Q06680</accession>
<accession>D6VSV8</accession>
<dbReference type="EMBL" id="U32517">
    <property type="protein sequence ID" value="AAB64761.2"/>
    <property type="molecule type" value="Genomic_DNA"/>
</dbReference>
<dbReference type="EMBL" id="BK006938">
    <property type="protein sequence ID" value="DAA12168.1"/>
    <property type="molecule type" value="Genomic_DNA"/>
</dbReference>
<dbReference type="RefSeq" id="NP_010612.2">
    <property type="nucleotide sequence ID" value="NM_001180633.1"/>
</dbReference>
<dbReference type="PDB" id="5OQN">
    <property type="method" value="X-ray"/>
    <property type="resolution" value="3.15 A"/>
    <property type="chains" value="A=6-932"/>
</dbReference>
<dbReference type="PDB" id="5OQO">
    <property type="method" value="X-ray"/>
    <property type="resolution" value="3.25 A"/>
    <property type="chains" value="A=6-932"/>
</dbReference>
<dbReference type="PDB" id="5OQP">
    <property type="method" value="X-ray"/>
    <property type="resolution" value="2.98 A"/>
    <property type="chains" value="A=6-932"/>
</dbReference>
<dbReference type="PDB" id="5OQQ">
    <property type="method" value="X-ray"/>
    <property type="resolution" value="2.79 A"/>
    <property type="chains" value="A/B=6-932"/>
</dbReference>
<dbReference type="PDB" id="6YVD">
    <property type="method" value="EM"/>
    <property type="resolution" value="7.60 A"/>
    <property type="chains" value="A=1-1035"/>
</dbReference>
<dbReference type="PDB" id="7Q2Z">
    <property type="method" value="EM"/>
    <property type="resolution" value="3.20 A"/>
    <property type="chains" value="E=1-1035"/>
</dbReference>
<dbReference type="PDB" id="7QFW">
    <property type="method" value="EM"/>
    <property type="resolution" value="3.86 A"/>
    <property type="chains" value="A=1-1035"/>
</dbReference>
<dbReference type="PDBsum" id="5OQN"/>
<dbReference type="PDBsum" id="5OQO"/>
<dbReference type="PDBsum" id="5OQP"/>
<dbReference type="PDBsum" id="5OQQ"/>
<dbReference type="PDBsum" id="6YVD"/>
<dbReference type="PDBsum" id="7Q2Z"/>
<dbReference type="PDBsum" id="7QFW"/>
<dbReference type="EMDB" id="EMD-10944"/>
<dbReference type="EMDB" id="EMD-13786"/>
<dbReference type="EMDB" id="EMD-13950"/>
<dbReference type="SMR" id="Q06680"/>
<dbReference type="BioGRID" id="32383">
    <property type="interactions" value="228"/>
</dbReference>
<dbReference type="ComplexPortal" id="CPX-1869">
    <property type="entry name" value="Nuclear condensin complex"/>
</dbReference>
<dbReference type="FunCoup" id="Q06680">
    <property type="interactions" value="309"/>
</dbReference>
<dbReference type="IntAct" id="Q06680">
    <property type="interactions" value="11"/>
</dbReference>
<dbReference type="MINT" id="Q06680"/>
<dbReference type="STRING" id="4932.YDR325W"/>
<dbReference type="iPTMnet" id="Q06680"/>
<dbReference type="PaxDb" id="4932-YDR325W"/>
<dbReference type="PeptideAtlas" id="Q06680"/>
<dbReference type="EnsemblFungi" id="YDR325W_mRNA">
    <property type="protein sequence ID" value="YDR325W"/>
    <property type="gene ID" value="YDR325W"/>
</dbReference>
<dbReference type="GeneID" id="851925"/>
<dbReference type="KEGG" id="sce:YDR325W"/>
<dbReference type="AGR" id="SGD:S000002733"/>
<dbReference type="SGD" id="S000002733">
    <property type="gene designation" value="YCG1"/>
</dbReference>
<dbReference type="VEuPathDB" id="FungiDB:YDR325W"/>
<dbReference type="eggNOG" id="KOG2025">
    <property type="taxonomic scope" value="Eukaryota"/>
</dbReference>
<dbReference type="GeneTree" id="ENSGT00390000001577"/>
<dbReference type="HOGENOM" id="CLU_004446_1_1_1"/>
<dbReference type="InParanoid" id="Q06680"/>
<dbReference type="OMA" id="FRATQIT"/>
<dbReference type="OrthoDB" id="27187at2759"/>
<dbReference type="BioCyc" id="YEAST:G3O-29882-MONOMER"/>
<dbReference type="Reactome" id="R-SCE-2514853">
    <property type="pathway name" value="Condensation of Prometaphase Chromosomes"/>
</dbReference>
<dbReference type="BioGRID-ORCS" id="851925">
    <property type="hits" value="2 hits in 10 CRISPR screens"/>
</dbReference>
<dbReference type="PRO" id="PR:Q06680"/>
<dbReference type="Proteomes" id="UP000002311">
    <property type="component" value="Chromosome IV"/>
</dbReference>
<dbReference type="RNAct" id="Q06680">
    <property type="molecule type" value="protein"/>
</dbReference>
<dbReference type="GO" id="GO:0000793">
    <property type="term" value="C:condensed chromosome"/>
    <property type="evidence" value="ECO:0000318"/>
    <property type="project" value="GO_Central"/>
</dbReference>
<dbReference type="GO" id="GO:0000796">
    <property type="term" value="C:condensin complex"/>
    <property type="evidence" value="ECO:0000314"/>
    <property type="project" value="SGD"/>
</dbReference>
<dbReference type="GO" id="GO:0005737">
    <property type="term" value="C:cytoplasm"/>
    <property type="evidence" value="ECO:0007669"/>
    <property type="project" value="UniProtKB-SubCell"/>
</dbReference>
<dbReference type="GO" id="GO:0005634">
    <property type="term" value="C:nucleus"/>
    <property type="evidence" value="ECO:0007669"/>
    <property type="project" value="UniProtKB-SubCell"/>
</dbReference>
<dbReference type="GO" id="GO:0003682">
    <property type="term" value="F:chromatin binding"/>
    <property type="evidence" value="ECO:0000316"/>
    <property type="project" value="SGD"/>
</dbReference>
<dbReference type="GO" id="GO:0051301">
    <property type="term" value="P:cell division"/>
    <property type="evidence" value="ECO:0007669"/>
    <property type="project" value="UniProtKB-KW"/>
</dbReference>
<dbReference type="GO" id="GO:0030261">
    <property type="term" value="P:chromosome condensation"/>
    <property type="evidence" value="ECO:0000303"/>
    <property type="project" value="ComplexPortal"/>
</dbReference>
<dbReference type="GO" id="GO:0010032">
    <property type="term" value="P:meiotic chromosome condensation"/>
    <property type="evidence" value="ECO:0000315"/>
    <property type="project" value="SGD"/>
</dbReference>
<dbReference type="GO" id="GO:0051307">
    <property type="term" value="P:meiotic chromosome separation"/>
    <property type="evidence" value="ECO:0000315"/>
    <property type="project" value="SGD"/>
</dbReference>
<dbReference type="GO" id="GO:0007076">
    <property type="term" value="P:mitotic chromosome condensation"/>
    <property type="evidence" value="ECO:0000315"/>
    <property type="project" value="SGD"/>
</dbReference>
<dbReference type="GO" id="GO:0000070">
    <property type="term" value="P:mitotic sister chromatid segregation"/>
    <property type="evidence" value="ECO:0000315"/>
    <property type="project" value="SGD"/>
</dbReference>
<dbReference type="GO" id="GO:1903342">
    <property type="term" value="P:negative regulation of meiotic DNA double-strand break formation"/>
    <property type="evidence" value="ECO:0000315"/>
    <property type="project" value="SGD"/>
</dbReference>
<dbReference type="GO" id="GO:0070550">
    <property type="term" value="P:rDNA chromatin condensation"/>
    <property type="evidence" value="ECO:0000315"/>
    <property type="project" value="SGD"/>
</dbReference>
<dbReference type="GO" id="GO:0007130">
    <property type="term" value="P:synaptonemal complex assembly"/>
    <property type="evidence" value="ECO:0000315"/>
    <property type="project" value="SGD"/>
</dbReference>
<dbReference type="GO" id="GO:0070058">
    <property type="term" value="P:tRNA gene clustering"/>
    <property type="evidence" value="ECO:0000315"/>
    <property type="project" value="SGD"/>
</dbReference>
<dbReference type="Gene3D" id="1.25.10.10">
    <property type="entry name" value="Leucine-rich Repeat Variant"/>
    <property type="match status" value="1"/>
</dbReference>
<dbReference type="InterPro" id="IPR011989">
    <property type="entry name" value="ARM-like"/>
</dbReference>
<dbReference type="InterPro" id="IPR016024">
    <property type="entry name" value="ARM-type_fold"/>
</dbReference>
<dbReference type="InterPro" id="IPR027165">
    <property type="entry name" value="CND3"/>
</dbReference>
<dbReference type="InterPro" id="IPR025977">
    <property type="entry name" value="Cnd3_C"/>
</dbReference>
<dbReference type="PANTHER" id="PTHR14418:SF5">
    <property type="entry name" value="CONDENSIN COMPLEX SUBUNIT 3"/>
    <property type="match status" value="1"/>
</dbReference>
<dbReference type="PANTHER" id="PTHR14418">
    <property type="entry name" value="CONDENSIN COMPLEX SUBUNIT 3-RELATED"/>
    <property type="match status" value="1"/>
</dbReference>
<dbReference type="Pfam" id="PF12719">
    <property type="entry name" value="Cnd3"/>
    <property type="match status" value="1"/>
</dbReference>
<dbReference type="SUPFAM" id="SSF48371">
    <property type="entry name" value="ARM repeat"/>
    <property type="match status" value="1"/>
</dbReference>
<name>CND3_YEAST</name>
<comment type="function">
    <text>Regulatory subunit of the condensin complex, a complex required for conversion of interphase chromatin into mitotic-like condense chromosomes. The condensin complex probably introduces positive supercoils into relaxed DNA in the presence of type I topoisomerases and converts nicked DNA into positive knotted forms in the presence of type II topoisomerases. The condensin complex probably also plays a role during interphase.</text>
</comment>
<comment type="subunit">
    <text evidence="2">Component of the condensin complex, which contains the SMC2 and SMC4 heterodimer, and three non SMC subunits that probably regulate the complex: BRN1, YCS4 and YCG1/YCS5.</text>
</comment>
<comment type="interaction">
    <interactant intactId="EBI-4799">
        <id>Q06680</id>
    </interactant>
    <interactant intactId="EBI-17412">
        <id>P38989</id>
        <label>SMC2</label>
    </interactant>
    <organismsDiffer>false</organismsDiffer>
    <experiments>4</experiments>
</comment>
<comment type="interaction">
    <interactant intactId="EBI-4799">
        <id>Q06680</id>
    </interactant>
    <interactant intactId="EBI-17430">
        <id>Q12267</id>
        <label>SMC4</label>
    </interactant>
    <organismsDiffer>false</organismsDiffer>
    <experiments>3</experiments>
</comment>
<comment type="subcellular location">
    <subcellularLocation>
        <location>Nucleus</location>
    </subcellularLocation>
    <subcellularLocation>
        <location>Cytoplasm</location>
    </subcellularLocation>
    <subcellularLocation>
        <location>Chromosome</location>
    </subcellularLocation>
    <text>In interphase cells, the majority of the condensin complex is found in the cytoplasm, while a minority of the complex is associated with chromatin. A subpopulation of the complex however remains associated with chromosome foci in interphase cells. During mitosis, most of the condensin complex is associated with the chromatin. At the onset of prophase, condensin associates with chromosome arms and to chromosome condensation. Dissociation from chromosomes is observed in late telophase.</text>
</comment>
<comment type="miscellaneous">
    <text evidence="3">Present with 1920 molecules/cell in log phase SD medium.</text>
</comment>
<comment type="similarity">
    <text evidence="4">Belongs to the CND3 (condensin subunit 3) family.</text>
</comment>
<gene>
    <name type="primary">YCG1</name>
    <name type="synonym">YCS5</name>
    <name type="ordered locus">YDR325W</name>
</gene>